<keyword id="KW-1003">Cell membrane</keyword>
<keyword id="KW-0204">Cytolysis</keyword>
<keyword id="KW-0472">Membrane</keyword>
<keyword id="KW-0812">Transmembrane</keyword>
<keyword id="KW-1133">Transmembrane helix</keyword>
<evidence type="ECO:0000255" key="1">
    <source>
        <dbReference type="HAMAP-Rule" id="MF_01142"/>
    </source>
</evidence>
<comment type="function">
    <text evidence="1">Inhibits the expression or activity of extracellular murein hydrolases by interacting, possibly with LrgA, with the holin-like proteins CidA and/or CidB. The LrgAB and CidAB proteins may affect the proton motive force of the membrane. May be involved in programmed cell death (PCD), possibly triggering PCD in response to antibiotics and environmental stresses.</text>
</comment>
<comment type="subcellular location">
    <subcellularLocation>
        <location evidence="1">Cell membrane</location>
        <topology evidence="1">Multi-pass membrane protein</topology>
    </subcellularLocation>
</comment>
<comment type="similarity">
    <text evidence="1">Belongs to the CidB/LrgB family. LrgB subfamily.</text>
</comment>
<name>LRGB_STAA2</name>
<proteinExistence type="inferred from homology"/>
<feature type="chain" id="PRO_1000085033" description="Antiholin-like protein LrgB">
    <location>
        <begin position="1"/>
        <end position="233"/>
    </location>
</feature>
<feature type="transmembrane region" description="Helical" evidence="1">
    <location>
        <begin position="9"/>
        <end position="29"/>
    </location>
</feature>
<feature type="transmembrane region" description="Helical" evidence="1">
    <location>
        <begin position="34"/>
        <end position="54"/>
    </location>
</feature>
<feature type="transmembrane region" description="Helical" evidence="1">
    <location>
        <begin position="63"/>
        <end position="83"/>
    </location>
</feature>
<feature type="transmembrane region" description="Helical" evidence="1">
    <location>
        <begin position="97"/>
        <end position="117"/>
    </location>
</feature>
<feature type="transmembrane region" description="Helical" evidence="1">
    <location>
        <begin position="121"/>
        <end position="141"/>
    </location>
</feature>
<feature type="transmembrane region" description="Helical" evidence="1">
    <location>
        <begin position="144"/>
        <end position="164"/>
    </location>
</feature>
<feature type="transmembrane region" description="Helical" evidence="1">
    <location>
        <begin position="212"/>
        <end position="232"/>
    </location>
</feature>
<dbReference type="EMBL" id="CP000736">
    <property type="protein sequence ID" value="ABR51116.1"/>
    <property type="molecule type" value="Genomic_DNA"/>
</dbReference>
<dbReference type="KEGG" id="sah:SaurJH1_0254"/>
<dbReference type="HOGENOM" id="CLU_082099_1_0_9"/>
<dbReference type="GO" id="GO:0005886">
    <property type="term" value="C:plasma membrane"/>
    <property type="evidence" value="ECO:0007669"/>
    <property type="project" value="UniProtKB-SubCell"/>
</dbReference>
<dbReference type="GO" id="GO:0019835">
    <property type="term" value="P:cytolysis"/>
    <property type="evidence" value="ECO:0007669"/>
    <property type="project" value="UniProtKB-UniRule"/>
</dbReference>
<dbReference type="GO" id="GO:0031640">
    <property type="term" value="P:killing of cells of another organism"/>
    <property type="evidence" value="ECO:0007669"/>
    <property type="project" value="UniProtKB-KW"/>
</dbReference>
<dbReference type="GO" id="GO:0012501">
    <property type="term" value="P:programmed cell death"/>
    <property type="evidence" value="ECO:0007669"/>
    <property type="project" value="UniProtKB-UniRule"/>
</dbReference>
<dbReference type="HAMAP" id="MF_01142">
    <property type="entry name" value="LrgB"/>
    <property type="match status" value="1"/>
</dbReference>
<dbReference type="InterPro" id="IPR024891">
    <property type="entry name" value="Antiholin-like_LrgB"/>
</dbReference>
<dbReference type="InterPro" id="IPR007300">
    <property type="entry name" value="CidB/LrgB"/>
</dbReference>
<dbReference type="NCBIfam" id="NF003291">
    <property type="entry name" value="PRK04288.1"/>
    <property type="match status" value="1"/>
</dbReference>
<dbReference type="PANTHER" id="PTHR30249:SF0">
    <property type="entry name" value="PLASTIDAL GLYCOLATE_GLYCERATE TRANSLOCATOR 1, CHLOROPLASTIC"/>
    <property type="match status" value="1"/>
</dbReference>
<dbReference type="PANTHER" id="PTHR30249">
    <property type="entry name" value="PUTATIVE SEROTONIN TRANSPORTER"/>
    <property type="match status" value="1"/>
</dbReference>
<dbReference type="Pfam" id="PF04172">
    <property type="entry name" value="LrgB"/>
    <property type="match status" value="1"/>
</dbReference>
<accession>A6TY48</accession>
<reference key="1">
    <citation type="submission" date="2007-06" db="EMBL/GenBank/DDBJ databases">
        <title>Complete sequence of chromosome of Staphylococcus aureus subsp. aureus JH1.</title>
        <authorList>
            <consortium name="US DOE Joint Genome Institute"/>
            <person name="Copeland A."/>
            <person name="Lucas S."/>
            <person name="Lapidus A."/>
            <person name="Barry K."/>
            <person name="Detter J.C."/>
            <person name="Glavina del Rio T."/>
            <person name="Hammon N."/>
            <person name="Israni S."/>
            <person name="Dalin E."/>
            <person name="Tice H."/>
            <person name="Pitluck S."/>
            <person name="Chain P."/>
            <person name="Malfatti S."/>
            <person name="Shin M."/>
            <person name="Vergez L."/>
            <person name="Schmutz J."/>
            <person name="Larimer F."/>
            <person name="Land M."/>
            <person name="Hauser L."/>
            <person name="Kyrpides N."/>
            <person name="Ivanova N."/>
            <person name="Tomasz A."/>
            <person name="Richardson P."/>
        </authorList>
    </citation>
    <scope>NUCLEOTIDE SEQUENCE [LARGE SCALE GENOMIC DNA]</scope>
    <source>
        <strain>JH1</strain>
    </source>
</reference>
<sequence>MINHLALNTPYFGILLSVIPFFLATILFEKTNRFFLFAPLFVSMVFGVAFLYLTGIPYKTYKIGGDIIYFFLEPATICFAIPLYKKREVLVKHWHRIIGGIGIGTVVALLIILTFAKLAQFANDVILSMLPQAATTAIALPVSAGIGGIKELTSLAVILNGVIIYALGNKFLKLFRITNPIARGLALGTSGHTLGVAPAKELGPVEESMASIALVLVGVVVVAVVPVFVAIFF</sequence>
<protein>
    <recommendedName>
        <fullName evidence="1">Antiholin-like protein LrgB</fullName>
    </recommendedName>
</protein>
<gene>
    <name evidence="1" type="primary">lrgB</name>
    <name type="ordered locus">SaurJH1_0254</name>
</gene>
<organism>
    <name type="scientific">Staphylococcus aureus (strain JH1)</name>
    <dbReference type="NCBI Taxonomy" id="359787"/>
    <lineage>
        <taxon>Bacteria</taxon>
        <taxon>Bacillati</taxon>
        <taxon>Bacillota</taxon>
        <taxon>Bacilli</taxon>
        <taxon>Bacillales</taxon>
        <taxon>Staphylococcaceae</taxon>
        <taxon>Staphylococcus</taxon>
    </lineage>
</organism>